<keyword id="KW-0963">Cytoplasm</keyword>
<sequence>MKPQKSLRARAMDILSRQEVSRIGLKRKLAPHAESEEELENVLNEFAERNWQSDLRYAEAYIRSKSRKHGSLRLKQALAQQGIDEKTSRNLLPDRSSEKQAAIAVLRKKFKHPAANLKEKQKQARFLAYRGFDADTVQTALKHAWDENWEDSC</sequence>
<feature type="chain" id="PRO_1000137179" description="Regulatory protein RecX">
    <location>
        <begin position="1"/>
        <end position="153"/>
    </location>
</feature>
<protein>
    <recommendedName>
        <fullName evidence="1">Regulatory protein RecX</fullName>
    </recommendedName>
</protein>
<name>RECX_NEIG2</name>
<dbReference type="EMBL" id="CP001050">
    <property type="protein sequence ID" value="ACF29410.1"/>
    <property type="molecule type" value="Genomic_DNA"/>
</dbReference>
<dbReference type="RefSeq" id="WP_003688187.1">
    <property type="nucleotide sequence ID" value="NC_011035.1"/>
</dbReference>
<dbReference type="SMR" id="B4RKR9"/>
<dbReference type="GeneID" id="66753371"/>
<dbReference type="KEGG" id="ngk:NGK_0729"/>
<dbReference type="HOGENOM" id="CLU_066607_3_1_4"/>
<dbReference type="Proteomes" id="UP000002564">
    <property type="component" value="Chromosome"/>
</dbReference>
<dbReference type="GO" id="GO:0005737">
    <property type="term" value="C:cytoplasm"/>
    <property type="evidence" value="ECO:0007669"/>
    <property type="project" value="UniProtKB-SubCell"/>
</dbReference>
<dbReference type="GO" id="GO:0006282">
    <property type="term" value="P:regulation of DNA repair"/>
    <property type="evidence" value="ECO:0007669"/>
    <property type="project" value="UniProtKB-UniRule"/>
</dbReference>
<dbReference type="Gene3D" id="1.10.10.10">
    <property type="entry name" value="Winged helix-like DNA-binding domain superfamily/Winged helix DNA-binding domain"/>
    <property type="match status" value="3"/>
</dbReference>
<dbReference type="HAMAP" id="MF_01114">
    <property type="entry name" value="RecX"/>
    <property type="match status" value="1"/>
</dbReference>
<dbReference type="InterPro" id="IPR053924">
    <property type="entry name" value="RecX_HTH_2nd"/>
</dbReference>
<dbReference type="InterPro" id="IPR053925">
    <property type="entry name" value="RecX_HTH_3rd"/>
</dbReference>
<dbReference type="InterPro" id="IPR003783">
    <property type="entry name" value="Regulatory_RecX"/>
</dbReference>
<dbReference type="InterPro" id="IPR036388">
    <property type="entry name" value="WH-like_DNA-bd_sf"/>
</dbReference>
<dbReference type="NCBIfam" id="NF001055">
    <property type="entry name" value="PRK00117.2-5"/>
    <property type="match status" value="1"/>
</dbReference>
<dbReference type="PANTHER" id="PTHR33602">
    <property type="entry name" value="REGULATORY PROTEIN RECX FAMILY PROTEIN"/>
    <property type="match status" value="1"/>
</dbReference>
<dbReference type="PANTHER" id="PTHR33602:SF1">
    <property type="entry name" value="REGULATORY PROTEIN RECX FAMILY PROTEIN"/>
    <property type="match status" value="1"/>
</dbReference>
<dbReference type="Pfam" id="PF02631">
    <property type="entry name" value="RecX_HTH2"/>
    <property type="match status" value="1"/>
</dbReference>
<dbReference type="Pfam" id="PF21981">
    <property type="entry name" value="RecX_HTH3"/>
    <property type="match status" value="1"/>
</dbReference>
<comment type="function">
    <text evidence="1">Modulates RecA activity.</text>
</comment>
<comment type="subcellular location">
    <subcellularLocation>
        <location evidence="1">Cytoplasm</location>
    </subcellularLocation>
</comment>
<comment type="similarity">
    <text evidence="1">Belongs to the RecX family.</text>
</comment>
<reference key="1">
    <citation type="journal article" date="2008" name="J. Bacteriol.">
        <title>Complete genome sequence of Neisseria gonorrhoeae NCCP11945.</title>
        <authorList>
            <person name="Chung G.T."/>
            <person name="Yoo J.S."/>
            <person name="Oh H.B."/>
            <person name="Lee Y.S."/>
            <person name="Cha S.H."/>
            <person name="Kim S.J."/>
            <person name="Yoo C.K."/>
        </authorList>
    </citation>
    <scope>NUCLEOTIDE SEQUENCE [LARGE SCALE GENOMIC DNA]</scope>
    <source>
        <strain>NCCP11945</strain>
    </source>
</reference>
<organism>
    <name type="scientific">Neisseria gonorrhoeae (strain NCCP11945)</name>
    <dbReference type="NCBI Taxonomy" id="521006"/>
    <lineage>
        <taxon>Bacteria</taxon>
        <taxon>Pseudomonadati</taxon>
        <taxon>Pseudomonadota</taxon>
        <taxon>Betaproteobacteria</taxon>
        <taxon>Neisseriales</taxon>
        <taxon>Neisseriaceae</taxon>
        <taxon>Neisseria</taxon>
    </lineage>
</organism>
<proteinExistence type="inferred from homology"/>
<accession>B4RKR9</accession>
<gene>
    <name evidence="1" type="primary">recX</name>
    <name type="ordered locus">NGK_0729</name>
</gene>
<evidence type="ECO:0000255" key="1">
    <source>
        <dbReference type="HAMAP-Rule" id="MF_01114"/>
    </source>
</evidence>